<protein>
    <recommendedName>
        <fullName evidence="1">Small ribosomal subunit protein bS20</fullName>
    </recommendedName>
    <alternativeName>
        <fullName evidence="3">30S ribosomal protein S20</fullName>
    </alternativeName>
</protein>
<accession>A1JJD9</accession>
<organism>
    <name type="scientific">Yersinia enterocolitica serotype O:8 / biotype 1B (strain NCTC 13174 / 8081)</name>
    <dbReference type="NCBI Taxonomy" id="393305"/>
    <lineage>
        <taxon>Bacteria</taxon>
        <taxon>Pseudomonadati</taxon>
        <taxon>Pseudomonadota</taxon>
        <taxon>Gammaproteobacteria</taxon>
        <taxon>Enterobacterales</taxon>
        <taxon>Yersiniaceae</taxon>
        <taxon>Yersinia</taxon>
    </lineage>
</organism>
<name>RS20_YERE8</name>
<proteinExistence type="inferred from homology"/>
<feature type="chain" id="PRO_1000014675" description="Small ribosomal subunit protein bS20">
    <location>
        <begin position="1"/>
        <end position="87"/>
    </location>
</feature>
<feature type="region of interest" description="Disordered" evidence="2">
    <location>
        <begin position="1"/>
        <end position="26"/>
    </location>
</feature>
<sequence>MANIKSAKKRAVQSEKRRKHNASRRSMVRTFIKKVYAAIAAGDKDTAQKAFNEMQPIVDRQSSKGLIHKNKAARHKSNLVAQINAMQ</sequence>
<gene>
    <name evidence="1" type="primary">rpsT</name>
    <name type="ordered locus">YE0613</name>
</gene>
<dbReference type="EMBL" id="AM286415">
    <property type="protein sequence ID" value="CAL10727.1"/>
    <property type="molecule type" value="Genomic_DNA"/>
</dbReference>
<dbReference type="RefSeq" id="WP_005157027.1">
    <property type="nucleotide sequence ID" value="NC_008800.1"/>
</dbReference>
<dbReference type="RefSeq" id="YP_001004967.1">
    <property type="nucleotide sequence ID" value="NC_008800.1"/>
</dbReference>
<dbReference type="SMR" id="A1JJD9"/>
<dbReference type="GeneID" id="31411776"/>
<dbReference type="KEGG" id="yen:YE0613"/>
<dbReference type="PATRIC" id="fig|393305.7.peg.708"/>
<dbReference type="eggNOG" id="COG0268">
    <property type="taxonomic scope" value="Bacteria"/>
</dbReference>
<dbReference type="HOGENOM" id="CLU_160655_4_0_6"/>
<dbReference type="OrthoDB" id="9807974at2"/>
<dbReference type="Proteomes" id="UP000000642">
    <property type="component" value="Chromosome"/>
</dbReference>
<dbReference type="GO" id="GO:0005829">
    <property type="term" value="C:cytosol"/>
    <property type="evidence" value="ECO:0007669"/>
    <property type="project" value="TreeGrafter"/>
</dbReference>
<dbReference type="GO" id="GO:0015935">
    <property type="term" value="C:small ribosomal subunit"/>
    <property type="evidence" value="ECO:0007669"/>
    <property type="project" value="TreeGrafter"/>
</dbReference>
<dbReference type="GO" id="GO:0070181">
    <property type="term" value="F:small ribosomal subunit rRNA binding"/>
    <property type="evidence" value="ECO:0007669"/>
    <property type="project" value="TreeGrafter"/>
</dbReference>
<dbReference type="GO" id="GO:0003735">
    <property type="term" value="F:structural constituent of ribosome"/>
    <property type="evidence" value="ECO:0007669"/>
    <property type="project" value="InterPro"/>
</dbReference>
<dbReference type="GO" id="GO:0006412">
    <property type="term" value="P:translation"/>
    <property type="evidence" value="ECO:0007669"/>
    <property type="project" value="UniProtKB-UniRule"/>
</dbReference>
<dbReference type="FunFam" id="1.20.58.110:FF:000001">
    <property type="entry name" value="30S ribosomal protein S20"/>
    <property type="match status" value="1"/>
</dbReference>
<dbReference type="Gene3D" id="1.20.58.110">
    <property type="entry name" value="Ribosomal protein S20"/>
    <property type="match status" value="1"/>
</dbReference>
<dbReference type="HAMAP" id="MF_00500">
    <property type="entry name" value="Ribosomal_bS20"/>
    <property type="match status" value="1"/>
</dbReference>
<dbReference type="InterPro" id="IPR002583">
    <property type="entry name" value="Ribosomal_bS20"/>
</dbReference>
<dbReference type="InterPro" id="IPR036510">
    <property type="entry name" value="Ribosomal_bS20_sf"/>
</dbReference>
<dbReference type="NCBIfam" id="TIGR00029">
    <property type="entry name" value="S20"/>
    <property type="match status" value="1"/>
</dbReference>
<dbReference type="PANTHER" id="PTHR33398">
    <property type="entry name" value="30S RIBOSOMAL PROTEIN S20"/>
    <property type="match status" value="1"/>
</dbReference>
<dbReference type="PANTHER" id="PTHR33398:SF1">
    <property type="entry name" value="SMALL RIBOSOMAL SUBUNIT PROTEIN BS20C"/>
    <property type="match status" value="1"/>
</dbReference>
<dbReference type="Pfam" id="PF01649">
    <property type="entry name" value="Ribosomal_S20p"/>
    <property type="match status" value="1"/>
</dbReference>
<dbReference type="SUPFAM" id="SSF46992">
    <property type="entry name" value="Ribosomal protein S20"/>
    <property type="match status" value="1"/>
</dbReference>
<comment type="function">
    <text evidence="1">Binds directly to 16S ribosomal RNA.</text>
</comment>
<comment type="similarity">
    <text evidence="1">Belongs to the bacterial ribosomal protein bS20 family.</text>
</comment>
<keyword id="KW-0687">Ribonucleoprotein</keyword>
<keyword id="KW-0689">Ribosomal protein</keyword>
<keyword id="KW-0694">RNA-binding</keyword>
<keyword id="KW-0699">rRNA-binding</keyword>
<reference key="1">
    <citation type="journal article" date="2006" name="PLoS Genet.">
        <title>The complete genome sequence and comparative genome analysis of the high pathogenicity Yersinia enterocolitica strain 8081.</title>
        <authorList>
            <person name="Thomson N.R."/>
            <person name="Howard S."/>
            <person name="Wren B.W."/>
            <person name="Holden M.T.G."/>
            <person name="Crossman L."/>
            <person name="Challis G.L."/>
            <person name="Churcher C."/>
            <person name="Mungall K."/>
            <person name="Brooks K."/>
            <person name="Chillingworth T."/>
            <person name="Feltwell T."/>
            <person name="Abdellah Z."/>
            <person name="Hauser H."/>
            <person name="Jagels K."/>
            <person name="Maddison M."/>
            <person name="Moule S."/>
            <person name="Sanders M."/>
            <person name="Whitehead S."/>
            <person name="Quail M.A."/>
            <person name="Dougan G."/>
            <person name="Parkhill J."/>
            <person name="Prentice M.B."/>
        </authorList>
    </citation>
    <scope>NUCLEOTIDE SEQUENCE [LARGE SCALE GENOMIC DNA]</scope>
    <source>
        <strain>NCTC 13174 / 8081</strain>
    </source>
</reference>
<evidence type="ECO:0000255" key="1">
    <source>
        <dbReference type="HAMAP-Rule" id="MF_00500"/>
    </source>
</evidence>
<evidence type="ECO:0000256" key="2">
    <source>
        <dbReference type="SAM" id="MobiDB-lite"/>
    </source>
</evidence>
<evidence type="ECO:0000305" key="3"/>